<keyword id="KW-0067">ATP-binding</keyword>
<keyword id="KW-0963">Cytoplasm</keyword>
<keyword id="KW-0315">Glutamine amidotransferase</keyword>
<keyword id="KW-0378">Hydrolase</keyword>
<keyword id="KW-0436">Ligase</keyword>
<keyword id="KW-0547">Nucleotide-binding</keyword>
<keyword id="KW-0658">Purine biosynthesis</keyword>
<keyword id="KW-1185">Reference proteome</keyword>
<accession>Q2J4N0</accession>
<comment type="function">
    <text evidence="1">Part of the phosphoribosylformylglycinamidine synthase complex involved in the purines biosynthetic pathway. Catalyzes the ATP-dependent conversion of formylglycinamide ribonucleotide (FGAR) and glutamine to yield formylglycinamidine ribonucleotide (FGAM) and glutamate. The FGAM synthase complex is composed of three subunits. PurQ produces an ammonia molecule by converting glutamine to glutamate. PurL transfers the ammonia molecule to FGAR to form FGAM in an ATP-dependent manner. PurS interacts with PurQ and PurL and is thought to assist in the transfer of the ammonia molecule from PurQ to PurL.</text>
</comment>
<comment type="catalytic activity">
    <reaction evidence="1">
        <text>N(2)-formyl-N(1)-(5-phospho-beta-D-ribosyl)glycinamide + L-glutamine + ATP + H2O = 2-formamido-N(1)-(5-O-phospho-beta-D-ribosyl)acetamidine + L-glutamate + ADP + phosphate + H(+)</text>
        <dbReference type="Rhea" id="RHEA:17129"/>
        <dbReference type="ChEBI" id="CHEBI:15377"/>
        <dbReference type="ChEBI" id="CHEBI:15378"/>
        <dbReference type="ChEBI" id="CHEBI:29985"/>
        <dbReference type="ChEBI" id="CHEBI:30616"/>
        <dbReference type="ChEBI" id="CHEBI:43474"/>
        <dbReference type="ChEBI" id="CHEBI:58359"/>
        <dbReference type="ChEBI" id="CHEBI:147286"/>
        <dbReference type="ChEBI" id="CHEBI:147287"/>
        <dbReference type="ChEBI" id="CHEBI:456216"/>
        <dbReference type="EC" id="6.3.5.3"/>
    </reaction>
</comment>
<comment type="catalytic activity">
    <reaction evidence="1">
        <text>L-glutamine + H2O = L-glutamate + NH4(+)</text>
        <dbReference type="Rhea" id="RHEA:15889"/>
        <dbReference type="ChEBI" id="CHEBI:15377"/>
        <dbReference type="ChEBI" id="CHEBI:28938"/>
        <dbReference type="ChEBI" id="CHEBI:29985"/>
        <dbReference type="ChEBI" id="CHEBI:58359"/>
        <dbReference type="EC" id="3.5.1.2"/>
    </reaction>
</comment>
<comment type="pathway">
    <text evidence="1">Purine metabolism; IMP biosynthesis via de novo pathway; 5-amino-1-(5-phospho-D-ribosyl)imidazole from N(2)-formyl-N(1)-(5-phospho-D-ribosyl)glycinamide: step 1/2.</text>
</comment>
<comment type="subunit">
    <text evidence="1">Part of the FGAM synthase complex composed of 1 PurL, 1 PurQ and 2 PurS subunits.</text>
</comment>
<comment type="subcellular location">
    <subcellularLocation>
        <location evidence="1">Cytoplasm</location>
    </subcellularLocation>
</comment>
<comment type="sequence caution" evidence="2">
    <conflict type="erroneous initiation">
        <sequence resource="EMBL-CDS" id="ABD13762"/>
    </conflict>
    <text>Extended N-terminus.</text>
</comment>
<feature type="chain" id="PRO_0000252706" description="Phosphoribosylformylglycinamidine synthase subunit PurQ">
    <location>
        <begin position="1"/>
        <end position="233"/>
    </location>
</feature>
<feature type="domain" description="Glutamine amidotransferase type-1" evidence="1">
    <location>
        <begin position="9"/>
        <end position="233"/>
    </location>
</feature>
<feature type="active site" description="Nucleophile" evidence="1">
    <location>
        <position position="92"/>
    </location>
</feature>
<feature type="active site" evidence="1">
    <location>
        <position position="201"/>
    </location>
</feature>
<feature type="active site" evidence="1">
    <location>
        <position position="203"/>
    </location>
</feature>
<evidence type="ECO:0000255" key="1">
    <source>
        <dbReference type="HAMAP-Rule" id="MF_00421"/>
    </source>
</evidence>
<evidence type="ECO:0000305" key="2"/>
<reference key="1">
    <citation type="journal article" date="2007" name="Genome Res.">
        <title>Genome characteristics of facultatively symbiotic Frankia sp. strains reflect host range and host plant biogeography.</title>
        <authorList>
            <person name="Normand P."/>
            <person name="Lapierre P."/>
            <person name="Tisa L.S."/>
            <person name="Gogarten J.P."/>
            <person name="Alloisio N."/>
            <person name="Bagnarol E."/>
            <person name="Bassi C.A."/>
            <person name="Berry A.M."/>
            <person name="Bickhart D.M."/>
            <person name="Choisne N."/>
            <person name="Couloux A."/>
            <person name="Cournoyer B."/>
            <person name="Cruveiller S."/>
            <person name="Daubin V."/>
            <person name="Demange N."/>
            <person name="Francino M.P."/>
            <person name="Goltsman E."/>
            <person name="Huang Y."/>
            <person name="Kopp O.R."/>
            <person name="Labarre L."/>
            <person name="Lapidus A."/>
            <person name="Lavire C."/>
            <person name="Marechal J."/>
            <person name="Martinez M."/>
            <person name="Mastronunzio J.E."/>
            <person name="Mullin B.C."/>
            <person name="Niemann J."/>
            <person name="Pujic P."/>
            <person name="Rawnsley T."/>
            <person name="Rouy Z."/>
            <person name="Schenowitz C."/>
            <person name="Sellstedt A."/>
            <person name="Tavares F."/>
            <person name="Tomkins J.P."/>
            <person name="Vallenet D."/>
            <person name="Valverde C."/>
            <person name="Wall L.G."/>
            <person name="Wang Y."/>
            <person name="Medigue C."/>
            <person name="Benson D.R."/>
        </authorList>
    </citation>
    <scope>NUCLEOTIDE SEQUENCE [LARGE SCALE GENOMIC DNA]</scope>
    <source>
        <strain>DSM 45818 / CECT 9043 / HFP020203 / CcI3</strain>
    </source>
</reference>
<proteinExistence type="inferred from homology"/>
<organism>
    <name type="scientific">Frankia casuarinae (strain DSM 45818 / CECT 9043 / HFP020203 / CcI3)</name>
    <dbReference type="NCBI Taxonomy" id="106370"/>
    <lineage>
        <taxon>Bacteria</taxon>
        <taxon>Bacillati</taxon>
        <taxon>Actinomycetota</taxon>
        <taxon>Actinomycetes</taxon>
        <taxon>Frankiales</taxon>
        <taxon>Frankiaceae</taxon>
        <taxon>Frankia</taxon>
    </lineage>
</organism>
<dbReference type="EC" id="6.3.5.3" evidence="1"/>
<dbReference type="EC" id="3.5.1.2" evidence="1"/>
<dbReference type="EMBL" id="CP000249">
    <property type="protein sequence ID" value="ABD13762.1"/>
    <property type="status" value="ALT_INIT"/>
    <property type="molecule type" value="Genomic_DNA"/>
</dbReference>
<dbReference type="RefSeq" id="WP_076804178.1">
    <property type="nucleotide sequence ID" value="NZ_MSEA01000238.1"/>
</dbReference>
<dbReference type="SMR" id="Q2J4N0"/>
<dbReference type="STRING" id="106370.Francci3_4416"/>
<dbReference type="KEGG" id="fra:Francci3_4416"/>
<dbReference type="eggNOG" id="COG0047">
    <property type="taxonomic scope" value="Bacteria"/>
</dbReference>
<dbReference type="HOGENOM" id="CLU_001031_3_1_11"/>
<dbReference type="PhylomeDB" id="Q2J4N0"/>
<dbReference type="UniPathway" id="UPA00074">
    <property type="reaction ID" value="UER00128"/>
</dbReference>
<dbReference type="Proteomes" id="UP000001937">
    <property type="component" value="Chromosome"/>
</dbReference>
<dbReference type="GO" id="GO:0005737">
    <property type="term" value="C:cytoplasm"/>
    <property type="evidence" value="ECO:0007669"/>
    <property type="project" value="UniProtKB-SubCell"/>
</dbReference>
<dbReference type="GO" id="GO:0005524">
    <property type="term" value="F:ATP binding"/>
    <property type="evidence" value="ECO:0007669"/>
    <property type="project" value="UniProtKB-KW"/>
</dbReference>
<dbReference type="GO" id="GO:0004359">
    <property type="term" value="F:glutaminase activity"/>
    <property type="evidence" value="ECO:0007669"/>
    <property type="project" value="UniProtKB-EC"/>
</dbReference>
<dbReference type="GO" id="GO:0004642">
    <property type="term" value="F:phosphoribosylformylglycinamidine synthase activity"/>
    <property type="evidence" value="ECO:0007669"/>
    <property type="project" value="UniProtKB-UniRule"/>
</dbReference>
<dbReference type="GO" id="GO:0006189">
    <property type="term" value="P:'de novo' IMP biosynthetic process"/>
    <property type="evidence" value="ECO:0007669"/>
    <property type="project" value="UniProtKB-UniRule"/>
</dbReference>
<dbReference type="CDD" id="cd01740">
    <property type="entry name" value="GATase1_FGAR_AT"/>
    <property type="match status" value="1"/>
</dbReference>
<dbReference type="FunFam" id="3.40.50.880:FF:000019">
    <property type="entry name" value="Phosphoribosylformylglycinamidine synthase subunit PurQ"/>
    <property type="match status" value="1"/>
</dbReference>
<dbReference type="Gene3D" id="3.40.50.880">
    <property type="match status" value="1"/>
</dbReference>
<dbReference type="HAMAP" id="MF_00421">
    <property type="entry name" value="PurQ"/>
    <property type="match status" value="1"/>
</dbReference>
<dbReference type="InterPro" id="IPR029062">
    <property type="entry name" value="Class_I_gatase-like"/>
</dbReference>
<dbReference type="InterPro" id="IPR010075">
    <property type="entry name" value="PRibForGlyAmidine_synth_PurQ"/>
</dbReference>
<dbReference type="NCBIfam" id="TIGR01737">
    <property type="entry name" value="FGAM_synth_I"/>
    <property type="match status" value="1"/>
</dbReference>
<dbReference type="NCBIfam" id="NF002957">
    <property type="entry name" value="PRK03619.1"/>
    <property type="match status" value="1"/>
</dbReference>
<dbReference type="PANTHER" id="PTHR47552">
    <property type="entry name" value="PHOSPHORIBOSYLFORMYLGLYCINAMIDINE SYNTHASE SUBUNIT PURQ"/>
    <property type="match status" value="1"/>
</dbReference>
<dbReference type="PANTHER" id="PTHR47552:SF1">
    <property type="entry name" value="PHOSPHORIBOSYLFORMYLGLYCINAMIDINE SYNTHASE SUBUNIT PURQ"/>
    <property type="match status" value="1"/>
</dbReference>
<dbReference type="Pfam" id="PF13507">
    <property type="entry name" value="GATase_5"/>
    <property type="match status" value="1"/>
</dbReference>
<dbReference type="PIRSF" id="PIRSF001586">
    <property type="entry name" value="FGAM_synth_I"/>
    <property type="match status" value="1"/>
</dbReference>
<dbReference type="SMART" id="SM01211">
    <property type="entry name" value="GATase_5"/>
    <property type="match status" value="1"/>
</dbReference>
<dbReference type="SUPFAM" id="SSF52317">
    <property type="entry name" value="Class I glutamine amidotransferase-like"/>
    <property type="match status" value="1"/>
</dbReference>
<dbReference type="PROSITE" id="PS51273">
    <property type="entry name" value="GATASE_TYPE_1"/>
    <property type="match status" value="1"/>
</dbReference>
<name>PURQ_FRACC</name>
<gene>
    <name evidence="1" type="primary">purQ</name>
    <name type="ordered locus">Francci3_4416</name>
</gene>
<protein>
    <recommendedName>
        <fullName evidence="1">Phosphoribosylformylglycinamidine synthase subunit PurQ</fullName>
        <shortName evidence="1">FGAM synthase</shortName>
        <ecNumber evidence="1">6.3.5.3</ecNumber>
    </recommendedName>
    <alternativeName>
        <fullName evidence="1">Formylglycinamide ribonucleotide amidotransferase subunit I</fullName>
        <shortName evidence="1">FGAR amidotransferase I</shortName>
        <shortName evidence="1">FGAR-AT I</shortName>
    </alternativeName>
    <alternativeName>
        <fullName evidence="1">Glutaminase PurQ</fullName>
        <ecNumber evidence="1">3.5.1.2</ecNumber>
    </alternativeName>
    <alternativeName>
        <fullName evidence="1">Phosphoribosylformylglycinamidine synthase subunit I</fullName>
    </alternativeName>
</protein>
<sequence>MTEADSPARIGIVTFPGSLDDQDTALAVRAAGAEPVSLWHGDSDLAGVDAVILPGGFSYGDYLRAGAIARFSPMVAALVPAARAGLPILGICNGFQVLCEAGLLPGALTRNVGLHFVCRDQRLRVEAPGTAWTRGYQDGEEIVIPVKHGDGRYVAAPDVLAELEAAGRVVVRYVGGNPNGSAADIAGICNESRTIVGLMPHPEHAVDDLTGPGVDGLRMFTSVLSGFLSAFSS</sequence>